<keyword id="KW-0027">Amidation</keyword>
<keyword id="KW-1015">Disulfide bond</keyword>
<keyword id="KW-0379">Hydroxylation</keyword>
<keyword id="KW-0872">Ion channel impairing toxin</keyword>
<keyword id="KW-0528">Neurotoxin</keyword>
<keyword id="KW-0964">Secreted</keyword>
<keyword id="KW-0800">Toxin</keyword>
<keyword id="KW-0738">Voltage-gated sodium channel impairing toxin</keyword>
<dbReference type="ConoServer" id="1616">
    <property type="toxin name" value="TIIIA"/>
</dbReference>
<dbReference type="GO" id="GO:0005576">
    <property type="term" value="C:extracellular region"/>
    <property type="evidence" value="ECO:0007669"/>
    <property type="project" value="UniProtKB-SubCell"/>
</dbReference>
<dbReference type="GO" id="GO:0019871">
    <property type="term" value="F:sodium channel inhibitor activity"/>
    <property type="evidence" value="ECO:0007669"/>
    <property type="project" value="InterPro"/>
</dbReference>
<dbReference type="GO" id="GO:0090729">
    <property type="term" value="F:toxin activity"/>
    <property type="evidence" value="ECO:0007669"/>
    <property type="project" value="UniProtKB-KW"/>
</dbReference>
<dbReference type="InterPro" id="IPR008036">
    <property type="entry name" value="Conotoxin_mu-typ"/>
</dbReference>
<dbReference type="Pfam" id="PF05374">
    <property type="entry name" value="Mu-conotoxin"/>
    <property type="match status" value="1"/>
</dbReference>
<accession>P0C350</accession>
<evidence type="ECO:0000250" key="1"/>
<evidence type="ECO:0000250" key="2">
    <source>
        <dbReference type="UniProtKB" id="P01523"/>
    </source>
</evidence>
<evidence type="ECO:0000269" key="3">
    <source>
    </source>
</evidence>
<evidence type="ECO:0000269" key="4">
    <source>
    </source>
</evidence>
<evidence type="ECO:0000269" key="5">
    <source>
    </source>
</evidence>
<evidence type="ECO:0000269" key="6">
    <source>
    </source>
</evidence>
<evidence type="ECO:0000269" key="7">
    <source>
    </source>
</evidence>
<evidence type="ECO:0000303" key="8">
    <source>
    </source>
</evidence>
<evidence type="ECO:0000303" key="9">
    <source>
    </source>
</evidence>
<evidence type="ECO:0000305" key="10"/>
<evidence type="ECO:0000305" key="11">
    <source>
    </source>
</evidence>
<evidence type="ECO:0000305" key="12">
    <source>
    </source>
</evidence>
<protein>
    <recommendedName>
        <fullName evidence="8 9">Mu-conotoxin TIIIA</fullName>
    </recommendedName>
</protein>
<comment type="function">
    <text evidence="4 5 7">Mu-conotoxins block voltage-gated sodium channels (Nav). This synthetic toxin reversibly and potently blocks rNav1.4/SCN4A (IC(50) is 9 nM) and rNav1.2/SCN2A (IC(50) is 40 nM). It also moderately blocks rNav1.1/SCN1A, rNav1.3/SCN3A, and rNav1.6/SCN8A. The block of SCN1A and SCN2A is modified when beta-subunits are coexpressed with alpha subunits. Hence, blocks of channels containing beta-1 and beta-3 subunits are more potent (compared to channels without beta subunits), whereas blocks of channels containing beta-2 and beta-4 subunits are less potent (compared to channels without beta subunits).</text>
</comment>
<comment type="subcellular location">
    <subcellularLocation>
        <location evidence="1">Secreted</location>
    </subcellularLocation>
</comment>
<comment type="tissue specificity">
    <text>Expressed by the venom duct.</text>
</comment>
<comment type="domain">
    <text>The cysteine framework is III (CC-C-C-CC). Classified in the M-4 branch, since 4 residues stand between the fourth and the fifth cysteine residues.</text>
</comment>
<comment type="miscellaneous">
    <text evidence="12">Negative results: does not block Nav1.5/SCN5A, Nav1.7/SCN9A, and Nav1.8/SCN10A.</text>
</comment>
<comment type="miscellaneous">
    <text evidence="1">No cis-trans isomerization is found.</text>
</comment>
<comment type="similarity">
    <text evidence="10">Belongs to the conotoxin M superfamily.</text>
</comment>
<comment type="caution">
    <text evidence="10">Native TIIIA is not detected in crude venom.</text>
</comment>
<proteinExistence type="evidence at protein level"/>
<feature type="peptide" id="PRO_0000288945" description="Mu-conotoxin TIIIA" evidence="11 12">
    <location>
        <begin position="1"/>
        <end position="22"/>
    </location>
</feature>
<feature type="site" description="Important for activity">
    <location>
        <position position="14"/>
    </location>
</feature>
<feature type="modified residue" description="4-hydroxyproline" evidence="11 12">
    <location>
        <position position="8"/>
    </location>
</feature>
<feature type="modified residue" description="4-hydroxyproline" evidence="11 12">
    <location>
        <position position="18"/>
    </location>
</feature>
<feature type="modified residue" description="Cysteine amide" evidence="11 12">
    <location>
        <position position="22"/>
    </location>
</feature>
<feature type="disulfide bond" evidence="2">
    <location>
        <begin position="4"/>
        <end position="16"/>
    </location>
</feature>
<feature type="disulfide bond" evidence="2">
    <location>
        <begin position="5"/>
        <end position="21"/>
    </location>
</feature>
<feature type="disulfide bond" evidence="2">
    <location>
        <begin position="11"/>
        <end position="22"/>
    </location>
</feature>
<feature type="mutagenesis site" description="Slight increase in toxicity at rNav1.4/SCN4A." evidence="3">
    <original>H</original>
    <variation>A</variation>
    <location>
        <position position="2"/>
    </location>
</feature>
<feature type="mutagenesis site" description="Little decrease in toxicity at both rNav1.4/SCN4A and rNav1.2/SCN2A." evidence="3">
    <original>K</original>
    <variation>A</variation>
    <variation>Q</variation>
    <location>
        <position position="6"/>
    </location>
</feature>
<feature type="mutagenesis site" description="Little decrease in toxicity at both rNav1.4/SCN4A and rNav1.2/SCN2A." evidence="3">
    <original>K</original>
    <variation>A</variation>
    <variation>Q</variation>
    <location>
        <position position="9"/>
    </location>
</feature>
<feature type="mutagenesis site" description="Important decrease of toxicity to both rNav1.4/SCN4A and rNav1.2/SCN2A." evidence="3">
    <original>R</original>
    <variation>A</variation>
    <variation>Y</variation>
    <variation>Q</variation>
    <location>
        <position position="14"/>
    </location>
</feature>
<feature type="mutagenesis site" description="10-fold increase in affinity for both rNav1.2/SCN2A and rNav1.4/SCN4A. Different changes when associated with C-terminal extension, see mutated Cys-22." evidence="3 6">
    <original>E</original>
    <variation>A</variation>
    <location>
        <position position="15"/>
    </location>
</feature>
<feature type="mutagenesis site" description="Little decrease in toxicity at both rNav1.4/SCN4A and rNav1.2/SCN2A." evidence="3">
    <original>R</original>
    <variation>A</variation>
    <variation>Q</variation>
    <location>
        <position position="17"/>
    </location>
</feature>
<feature type="mutagenesis site" description="Slight increase in toxicity at rNav1.4/SCN4A." evidence="3">
    <original>Q</original>
    <variation>A</variation>
    <location>
        <position position="19"/>
    </location>
</feature>
<feature type="mutagenesis site" description="Little decrease in toxicity to both rNav1.4/SCN4A and rNav1.2/SCN2A." evidence="3">
    <original>H</original>
    <variation>A</variation>
    <location>
        <position position="20"/>
    </location>
</feature>
<feature type="mutagenesis site" description="Slight increase in affinity to Nav1.2/SCN2A, but not change to Nav1.4/SCN4A; when associated with A-15 ([E15A,23A]TIIIA)." evidence="6">
    <original>C</original>
    <variation>CA</variation>
    <location>
        <position position="22"/>
    </location>
</feature>
<feature type="mutagenesis site" description="Slight increase in affinity to Nav1.2/SCN2A, but not change to Nav1.4/SCN4A; when associated with A-15 ([E15A,23A,24A]TIIIA)." evidence="6">
    <original>C</original>
    <variation>CAA</variation>
    <location>
        <position position="22"/>
    </location>
</feature>
<feature type="mutagenesis site" description="Decrease in affinity to both Nav1.2/SCN2A and Nav1.4/SCN4A; when associated with A-15 ([E15A,23A,24D]TIIIA)." evidence="6">
    <original>C</original>
    <variation>CAD</variation>
    <location>
        <position position="22"/>
    </location>
</feature>
<feature type="mutagenesis site" description="Important decrease in affinity to Nav1.2/SCN2A, but not change to Nav1.4/SCN4A; when associated with A-15 ([E15A,23A,24K]TIIIA)." evidence="6">
    <original>C</original>
    <variation>CAK</variation>
    <location>
        <position position="22"/>
    </location>
</feature>
<feature type="mutagenesis site" description="Decrease in affinity to both Nav1.2/SCN2A and Nav1.4/SCN4A; when associated with A-15 ([E15A,23D]TIIIA)." evidence="6">
    <original>C</original>
    <variation>CD</variation>
    <location>
        <position position="22"/>
    </location>
</feature>
<feature type="mutagenesis site" description="Decrease in affinity to Nav1.4/SCN4A, but no change to Nav1.2/SCN2A; when associated with A-15 ([E15A,23K]TIIIA)." evidence="6">
    <original>C</original>
    <variation>CK</variation>
    <location>
        <position position="22"/>
    </location>
</feature>
<reference key="1">
    <citation type="journal article" date="2007" name="Mol. Pharmacol.">
        <title>Isolation and structure-activity of mu-conotoxin TIIIA, a potent inhibitor of tetrodotoxin-sensitive voltage-gated sodium channels.</title>
        <authorList>
            <person name="Lewis R.J."/>
            <person name="Schroeder C.I."/>
            <person name="Ekberg J."/>
            <person name="Nielsen K.J."/>
            <person name="Loughnan M."/>
            <person name="Thomas L."/>
            <person name="Adams D.A."/>
            <person name="Drinkwater R."/>
            <person name="Adams D.J."/>
            <person name="Alewood P.F."/>
        </authorList>
    </citation>
    <scope>NUCLEOTIDE SEQUENCE [MRNA]</scope>
    <scope>SYNTHESIS</scope>
    <scope>AMIDATION AT CYS-22</scope>
    <scope>HYDROXYLATION AT PRO-8 AND PRO-18</scope>
    <scope>MUTAGENESIS OF HIS-2; LYS-6; LYS-9; ARG-14; GLU-15; ARG-17; GLN-19 AND HIS-20</scope>
    <source>
        <tissue>Venom duct</tissue>
    </source>
</reference>
<reference key="2">
    <citation type="journal article" date="2011" name="Proc. Natl. Acad. Sci. U.S.A.">
        <title>mu-Conotoxins that differentially block sodium channels Nav1.1 through 1.8 identify those responsible for action potentials in sciatic nerve.</title>
        <authorList>
            <person name="Wilson M.J."/>
            <person name="Yoshikami D."/>
            <person name="Azam L."/>
            <person name="Gajewiak J."/>
            <person name="Olivera B.M."/>
            <person name="Bulaj G."/>
            <person name="Zhang M.M."/>
        </authorList>
    </citation>
    <scope>FUNCTION ON SODIUM CHANNELS</scope>
    <scope>SYNTHESIS</scope>
    <scope>HYDROXYLATION AT PRO-8 AND PRO-18</scope>
    <scope>AMIDATION AT CYS-22</scope>
</reference>
<reference key="3">
    <citation type="journal article" date="2012" name="Br. J. Pharmacol.">
        <title>A novel u-conopeptide, CnIIIC, exerts potent and preferential inhibition of NaV1.2/1.4 channels and blocks neuronal nicotinic acetylcholine receptors.</title>
        <authorList>
            <person name="Favreau P."/>
            <person name="Benoit E."/>
            <person name="Hocking H.G."/>
            <person name="Carlier L."/>
            <person name="D'Hoedt D."/>
            <person name="Leipold E."/>
            <person name="Markgraf R."/>
            <person name="Schlumberger S."/>
            <person name="Cordova M.A."/>
            <person name="Gaertner H."/>
            <person name="Paolini-Bertrand M."/>
            <person name="Hartley O."/>
            <person name="Tytgat J."/>
            <person name="Heinemann S.H."/>
            <person name="Bertrand D."/>
            <person name="Boelens R."/>
            <person name="Stocklin R."/>
            <person name="Molgo J."/>
        </authorList>
    </citation>
    <scope>FUNCTION</scope>
    <scope>SYNTHESIS</scope>
</reference>
<reference key="4">
    <citation type="journal article" date="2012" name="Biopolymers">
        <title>N- and C-terminal extensions of mu-conotoxins increase potency and selectivity for neuronal sodium channels.</title>
        <authorList>
            <person name="Schroeder C.I."/>
            <person name="Adams D."/>
            <person name="Thomas L."/>
            <person name="Alewood P.F."/>
            <person name="Lewis R.J."/>
        </authorList>
    </citation>
    <scope>MUTAGENESIS OF GLU-15 AND CYS-22</scope>
    <scope>SYNTHESIS</scope>
</reference>
<reference key="5">
    <citation type="journal article" date="2013" name="Br. J. Pharmacol.">
        <title>Co-expression of Na(V)beta subunits alters the kinetics of inhibition of voltage-gated sodium channels by pore-blocking mu-conotoxins.</title>
        <authorList>
            <person name="Zhang M.M."/>
            <person name="Wilson M.J."/>
            <person name="Azam L."/>
            <person name="Gajewiak J."/>
            <person name="Rivier J.E."/>
            <person name="Bulaj G."/>
            <person name="Olivera B.M."/>
            <person name="Yoshikami D."/>
        </authorList>
    </citation>
    <scope>FUNCTION ON SODIUM CHANNELS</scope>
</reference>
<name>CM3A_CONTU</name>
<organism>
    <name type="scientific">Conus tulipa</name>
    <name type="common">Fish-hunting cone snail</name>
    <name type="synonym">Tulip cone</name>
    <dbReference type="NCBI Taxonomy" id="6495"/>
    <lineage>
        <taxon>Eukaryota</taxon>
        <taxon>Metazoa</taxon>
        <taxon>Spiralia</taxon>
        <taxon>Lophotrochozoa</taxon>
        <taxon>Mollusca</taxon>
        <taxon>Gastropoda</taxon>
        <taxon>Caenogastropoda</taxon>
        <taxon>Neogastropoda</taxon>
        <taxon>Conoidea</taxon>
        <taxon>Conidae</taxon>
        <taxon>Conus</taxon>
        <taxon>Gastridium</taxon>
    </lineage>
</organism>
<sequence>RHGCCKGPKGCSSRECRPQHCC</sequence>